<comment type="similarity">
    <text evidence="1">Belongs to the universal ribosomal protein uS9 family.</text>
</comment>
<name>RS9_CAMJJ</name>
<evidence type="ECO:0000255" key="1">
    <source>
        <dbReference type="HAMAP-Rule" id="MF_00532"/>
    </source>
</evidence>
<evidence type="ECO:0000256" key="2">
    <source>
        <dbReference type="SAM" id="MobiDB-lite"/>
    </source>
</evidence>
<evidence type="ECO:0000305" key="3"/>
<feature type="chain" id="PRO_1000051196" description="Small ribosomal subunit protein uS9">
    <location>
        <begin position="1"/>
        <end position="129"/>
    </location>
</feature>
<feature type="region of interest" description="Disordered" evidence="2">
    <location>
        <begin position="107"/>
        <end position="129"/>
    </location>
</feature>
<feature type="compositionally biased region" description="Basic residues" evidence="2">
    <location>
        <begin position="114"/>
        <end position="129"/>
    </location>
</feature>
<accession>A1W187</accession>
<proteinExistence type="inferred from homology"/>
<sequence length="129" mass="14137">MATTYATGKRKTAIAKVWVKPGSGKISVNGVDLNTWLGGHEAIKLKVVQPLLVTKQETSMDIKATTLGGGYSAQAEALRHGISRALAAMDADFRALLKPKGLLTRDSRTVERKKYGRRKARRSPQFSKR</sequence>
<protein>
    <recommendedName>
        <fullName evidence="1">Small ribosomal subunit protein uS9</fullName>
    </recommendedName>
    <alternativeName>
        <fullName evidence="3">30S ribosomal protein S9</fullName>
    </alternativeName>
</protein>
<reference key="1">
    <citation type="submission" date="2006-12" db="EMBL/GenBank/DDBJ databases">
        <authorList>
            <person name="Fouts D.E."/>
            <person name="Nelson K.E."/>
            <person name="Sebastian Y."/>
        </authorList>
    </citation>
    <scope>NUCLEOTIDE SEQUENCE [LARGE SCALE GENOMIC DNA]</scope>
    <source>
        <strain>81-176</strain>
    </source>
</reference>
<keyword id="KW-0687">Ribonucleoprotein</keyword>
<keyword id="KW-0689">Ribosomal protein</keyword>
<organism>
    <name type="scientific">Campylobacter jejuni subsp. jejuni serotype O:23/36 (strain 81-176)</name>
    <dbReference type="NCBI Taxonomy" id="354242"/>
    <lineage>
        <taxon>Bacteria</taxon>
        <taxon>Pseudomonadati</taxon>
        <taxon>Campylobacterota</taxon>
        <taxon>Epsilonproteobacteria</taxon>
        <taxon>Campylobacterales</taxon>
        <taxon>Campylobacteraceae</taxon>
        <taxon>Campylobacter</taxon>
    </lineage>
</organism>
<dbReference type="EMBL" id="CP000538">
    <property type="protein sequence ID" value="EAQ72705.1"/>
    <property type="molecule type" value="Genomic_DNA"/>
</dbReference>
<dbReference type="RefSeq" id="WP_002851459.1">
    <property type="nucleotide sequence ID" value="NC_008787.1"/>
</dbReference>
<dbReference type="SMR" id="A1W187"/>
<dbReference type="KEGG" id="cjj:CJJ81176_1472"/>
<dbReference type="eggNOG" id="COG0103">
    <property type="taxonomic scope" value="Bacteria"/>
</dbReference>
<dbReference type="HOGENOM" id="CLU_046483_2_1_7"/>
<dbReference type="Proteomes" id="UP000000646">
    <property type="component" value="Chromosome"/>
</dbReference>
<dbReference type="GO" id="GO:0022627">
    <property type="term" value="C:cytosolic small ribosomal subunit"/>
    <property type="evidence" value="ECO:0007669"/>
    <property type="project" value="TreeGrafter"/>
</dbReference>
<dbReference type="GO" id="GO:0003723">
    <property type="term" value="F:RNA binding"/>
    <property type="evidence" value="ECO:0007669"/>
    <property type="project" value="TreeGrafter"/>
</dbReference>
<dbReference type="GO" id="GO:0003735">
    <property type="term" value="F:structural constituent of ribosome"/>
    <property type="evidence" value="ECO:0007669"/>
    <property type="project" value="InterPro"/>
</dbReference>
<dbReference type="GO" id="GO:0006412">
    <property type="term" value="P:translation"/>
    <property type="evidence" value="ECO:0007669"/>
    <property type="project" value="UniProtKB-UniRule"/>
</dbReference>
<dbReference type="FunFam" id="3.30.230.10:FF:000025">
    <property type="entry name" value="30S ribosomal protein S9"/>
    <property type="match status" value="1"/>
</dbReference>
<dbReference type="Gene3D" id="3.30.230.10">
    <property type="match status" value="1"/>
</dbReference>
<dbReference type="HAMAP" id="MF_00532_B">
    <property type="entry name" value="Ribosomal_uS9_B"/>
    <property type="match status" value="1"/>
</dbReference>
<dbReference type="InterPro" id="IPR020568">
    <property type="entry name" value="Ribosomal_Su5_D2-typ_SF"/>
</dbReference>
<dbReference type="InterPro" id="IPR000754">
    <property type="entry name" value="Ribosomal_uS9"/>
</dbReference>
<dbReference type="InterPro" id="IPR023035">
    <property type="entry name" value="Ribosomal_uS9_bac/plastid"/>
</dbReference>
<dbReference type="InterPro" id="IPR020574">
    <property type="entry name" value="Ribosomal_uS9_CS"/>
</dbReference>
<dbReference type="InterPro" id="IPR014721">
    <property type="entry name" value="Ribsml_uS5_D2-typ_fold_subgr"/>
</dbReference>
<dbReference type="NCBIfam" id="NF001099">
    <property type="entry name" value="PRK00132.1"/>
    <property type="match status" value="1"/>
</dbReference>
<dbReference type="PANTHER" id="PTHR21569">
    <property type="entry name" value="RIBOSOMAL PROTEIN S9"/>
    <property type="match status" value="1"/>
</dbReference>
<dbReference type="PANTHER" id="PTHR21569:SF1">
    <property type="entry name" value="SMALL RIBOSOMAL SUBUNIT PROTEIN US9M"/>
    <property type="match status" value="1"/>
</dbReference>
<dbReference type="Pfam" id="PF00380">
    <property type="entry name" value="Ribosomal_S9"/>
    <property type="match status" value="1"/>
</dbReference>
<dbReference type="SUPFAM" id="SSF54211">
    <property type="entry name" value="Ribosomal protein S5 domain 2-like"/>
    <property type="match status" value="1"/>
</dbReference>
<dbReference type="PROSITE" id="PS00360">
    <property type="entry name" value="RIBOSOMAL_S9"/>
    <property type="match status" value="1"/>
</dbReference>
<gene>
    <name evidence="1" type="primary">rpsI</name>
    <name type="ordered locus">CJJ81176_1472</name>
</gene>